<dbReference type="EC" id="1.1.1.94" evidence="1"/>
<dbReference type="EMBL" id="CP000668">
    <property type="protein sequence ID" value="ABP42180.1"/>
    <property type="molecule type" value="Genomic_DNA"/>
</dbReference>
<dbReference type="RefSeq" id="WP_002208975.1">
    <property type="nucleotide sequence ID" value="NZ_CP009715.1"/>
</dbReference>
<dbReference type="SMR" id="A4TSB8"/>
<dbReference type="GeneID" id="57974523"/>
<dbReference type="KEGG" id="ypp:YPDSF_3837"/>
<dbReference type="PATRIC" id="fig|386656.14.peg.681"/>
<dbReference type="UniPathway" id="UPA00940"/>
<dbReference type="GO" id="GO:0005829">
    <property type="term" value="C:cytosol"/>
    <property type="evidence" value="ECO:0007669"/>
    <property type="project" value="TreeGrafter"/>
</dbReference>
<dbReference type="GO" id="GO:0047952">
    <property type="term" value="F:glycerol-3-phosphate dehydrogenase [NAD(P)+] activity"/>
    <property type="evidence" value="ECO:0007669"/>
    <property type="project" value="UniProtKB-UniRule"/>
</dbReference>
<dbReference type="GO" id="GO:0051287">
    <property type="term" value="F:NAD binding"/>
    <property type="evidence" value="ECO:0007669"/>
    <property type="project" value="InterPro"/>
</dbReference>
<dbReference type="GO" id="GO:0005975">
    <property type="term" value="P:carbohydrate metabolic process"/>
    <property type="evidence" value="ECO:0007669"/>
    <property type="project" value="InterPro"/>
</dbReference>
<dbReference type="GO" id="GO:0046167">
    <property type="term" value="P:glycerol-3-phosphate biosynthetic process"/>
    <property type="evidence" value="ECO:0007669"/>
    <property type="project" value="UniProtKB-UniRule"/>
</dbReference>
<dbReference type="GO" id="GO:0046168">
    <property type="term" value="P:glycerol-3-phosphate catabolic process"/>
    <property type="evidence" value="ECO:0007669"/>
    <property type="project" value="InterPro"/>
</dbReference>
<dbReference type="GO" id="GO:0046474">
    <property type="term" value="P:glycerophospholipid biosynthetic process"/>
    <property type="evidence" value="ECO:0007669"/>
    <property type="project" value="TreeGrafter"/>
</dbReference>
<dbReference type="FunFam" id="1.10.1040.10:FF:000001">
    <property type="entry name" value="Glycerol-3-phosphate dehydrogenase [NAD(P)+]"/>
    <property type="match status" value="1"/>
</dbReference>
<dbReference type="FunFam" id="3.40.50.720:FF:000019">
    <property type="entry name" value="Glycerol-3-phosphate dehydrogenase [NAD(P)+]"/>
    <property type="match status" value="1"/>
</dbReference>
<dbReference type="Gene3D" id="1.10.1040.10">
    <property type="entry name" value="N-(1-d-carboxylethyl)-l-norvaline Dehydrogenase, domain 2"/>
    <property type="match status" value="1"/>
</dbReference>
<dbReference type="Gene3D" id="3.40.50.720">
    <property type="entry name" value="NAD(P)-binding Rossmann-like Domain"/>
    <property type="match status" value="1"/>
</dbReference>
<dbReference type="HAMAP" id="MF_00394">
    <property type="entry name" value="NAD_Glyc3P_dehydrog"/>
    <property type="match status" value="1"/>
</dbReference>
<dbReference type="InterPro" id="IPR008927">
    <property type="entry name" value="6-PGluconate_DH-like_C_sf"/>
</dbReference>
<dbReference type="InterPro" id="IPR013328">
    <property type="entry name" value="6PGD_dom2"/>
</dbReference>
<dbReference type="InterPro" id="IPR006168">
    <property type="entry name" value="G3P_DH_NAD-dep"/>
</dbReference>
<dbReference type="InterPro" id="IPR006109">
    <property type="entry name" value="G3P_DH_NAD-dep_C"/>
</dbReference>
<dbReference type="InterPro" id="IPR011128">
    <property type="entry name" value="G3P_DH_NAD-dep_N"/>
</dbReference>
<dbReference type="InterPro" id="IPR036291">
    <property type="entry name" value="NAD(P)-bd_dom_sf"/>
</dbReference>
<dbReference type="NCBIfam" id="NF000939">
    <property type="entry name" value="PRK00094.1-1"/>
    <property type="match status" value="1"/>
</dbReference>
<dbReference type="NCBIfam" id="NF000940">
    <property type="entry name" value="PRK00094.1-2"/>
    <property type="match status" value="1"/>
</dbReference>
<dbReference type="NCBIfam" id="NF000942">
    <property type="entry name" value="PRK00094.1-4"/>
    <property type="match status" value="1"/>
</dbReference>
<dbReference type="PANTHER" id="PTHR11728">
    <property type="entry name" value="GLYCEROL-3-PHOSPHATE DEHYDROGENASE"/>
    <property type="match status" value="1"/>
</dbReference>
<dbReference type="PANTHER" id="PTHR11728:SF1">
    <property type="entry name" value="GLYCEROL-3-PHOSPHATE DEHYDROGENASE [NAD(+)] 2, CHLOROPLASTIC"/>
    <property type="match status" value="1"/>
</dbReference>
<dbReference type="Pfam" id="PF07479">
    <property type="entry name" value="NAD_Gly3P_dh_C"/>
    <property type="match status" value="1"/>
</dbReference>
<dbReference type="Pfam" id="PF01210">
    <property type="entry name" value="NAD_Gly3P_dh_N"/>
    <property type="match status" value="1"/>
</dbReference>
<dbReference type="PIRSF" id="PIRSF000114">
    <property type="entry name" value="Glycerol-3-P_dh"/>
    <property type="match status" value="1"/>
</dbReference>
<dbReference type="PRINTS" id="PR00077">
    <property type="entry name" value="GPDHDRGNASE"/>
</dbReference>
<dbReference type="SUPFAM" id="SSF48179">
    <property type="entry name" value="6-phosphogluconate dehydrogenase C-terminal domain-like"/>
    <property type="match status" value="1"/>
</dbReference>
<dbReference type="SUPFAM" id="SSF51735">
    <property type="entry name" value="NAD(P)-binding Rossmann-fold domains"/>
    <property type="match status" value="1"/>
</dbReference>
<dbReference type="PROSITE" id="PS00957">
    <property type="entry name" value="NAD_G3PDH"/>
    <property type="match status" value="1"/>
</dbReference>
<keyword id="KW-0963">Cytoplasm</keyword>
<keyword id="KW-0444">Lipid biosynthesis</keyword>
<keyword id="KW-0443">Lipid metabolism</keyword>
<keyword id="KW-0520">NAD</keyword>
<keyword id="KW-0521">NADP</keyword>
<keyword id="KW-0547">Nucleotide-binding</keyword>
<keyword id="KW-0560">Oxidoreductase</keyword>
<keyword id="KW-0594">Phospholipid biosynthesis</keyword>
<keyword id="KW-1208">Phospholipid metabolism</keyword>
<proteinExistence type="inferred from homology"/>
<protein>
    <recommendedName>
        <fullName evidence="1">Glycerol-3-phosphate dehydrogenase [NAD(P)+]</fullName>
        <ecNumber evidence="1">1.1.1.94</ecNumber>
    </recommendedName>
    <alternativeName>
        <fullName evidence="1">NAD(P)(+)-dependent glycerol-3-phosphate dehydrogenase</fullName>
    </alternativeName>
    <alternativeName>
        <fullName evidence="1">NAD(P)H-dependent dihydroxyacetone-phosphate reductase</fullName>
    </alternativeName>
</protein>
<comment type="function">
    <text evidence="1">Catalyzes the reduction of the glycolytic intermediate dihydroxyacetone phosphate (DHAP) to sn-glycerol 3-phosphate (G3P), the key precursor for phospholipid synthesis.</text>
</comment>
<comment type="catalytic activity">
    <reaction evidence="1">
        <text>sn-glycerol 3-phosphate + NAD(+) = dihydroxyacetone phosphate + NADH + H(+)</text>
        <dbReference type="Rhea" id="RHEA:11092"/>
        <dbReference type="ChEBI" id="CHEBI:15378"/>
        <dbReference type="ChEBI" id="CHEBI:57540"/>
        <dbReference type="ChEBI" id="CHEBI:57597"/>
        <dbReference type="ChEBI" id="CHEBI:57642"/>
        <dbReference type="ChEBI" id="CHEBI:57945"/>
        <dbReference type="EC" id="1.1.1.94"/>
    </reaction>
    <physiologicalReaction direction="right-to-left" evidence="1">
        <dbReference type="Rhea" id="RHEA:11094"/>
    </physiologicalReaction>
</comment>
<comment type="catalytic activity">
    <reaction evidence="1">
        <text>sn-glycerol 3-phosphate + NADP(+) = dihydroxyacetone phosphate + NADPH + H(+)</text>
        <dbReference type="Rhea" id="RHEA:11096"/>
        <dbReference type="ChEBI" id="CHEBI:15378"/>
        <dbReference type="ChEBI" id="CHEBI:57597"/>
        <dbReference type="ChEBI" id="CHEBI:57642"/>
        <dbReference type="ChEBI" id="CHEBI:57783"/>
        <dbReference type="ChEBI" id="CHEBI:58349"/>
        <dbReference type="EC" id="1.1.1.94"/>
    </reaction>
    <physiologicalReaction direction="right-to-left" evidence="1">
        <dbReference type="Rhea" id="RHEA:11098"/>
    </physiologicalReaction>
</comment>
<comment type="pathway">
    <text evidence="1">Membrane lipid metabolism; glycerophospholipid metabolism.</text>
</comment>
<comment type="subcellular location">
    <subcellularLocation>
        <location evidence="1">Cytoplasm</location>
    </subcellularLocation>
</comment>
<comment type="similarity">
    <text evidence="1">Belongs to the NAD-dependent glycerol-3-phosphate dehydrogenase family.</text>
</comment>
<evidence type="ECO:0000255" key="1">
    <source>
        <dbReference type="HAMAP-Rule" id="MF_00394"/>
    </source>
</evidence>
<organism>
    <name type="scientific">Yersinia pestis (strain Pestoides F)</name>
    <dbReference type="NCBI Taxonomy" id="386656"/>
    <lineage>
        <taxon>Bacteria</taxon>
        <taxon>Pseudomonadati</taxon>
        <taxon>Pseudomonadota</taxon>
        <taxon>Gammaproteobacteria</taxon>
        <taxon>Enterobacterales</taxon>
        <taxon>Yersiniaceae</taxon>
        <taxon>Yersinia</taxon>
    </lineage>
</organism>
<feature type="chain" id="PRO_1000049572" description="Glycerol-3-phosphate dehydrogenase [NAD(P)+]">
    <location>
        <begin position="1"/>
        <end position="339"/>
    </location>
</feature>
<feature type="active site" description="Proton acceptor" evidence="1">
    <location>
        <position position="195"/>
    </location>
</feature>
<feature type="binding site" evidence="1">
    <location>
        <position position="15"/>
    </location>
    <ligand>
        <name>NADPH</name>
        <dbReference type="ChEBI" id="CHEBI:57783"/>
    </ligand>
</feature>
<feature type="binding site" evidence="1">
    <location>
        <position position="16"/>
    </location>
    <ligand>
        <name>NADPH</name>
        <dbReference type="ChEBI" id="CHEBI:57783"/>
    </ligand>
</feature>
<feature type="binding site" evidence="1">
    <location>
        <position position="36"/>
    </location>
    <ligand>
        <name>NADPH</name>
        <dbReference type="ChEBI" id="CHEBI:57783"/>
    </ligand>
</feature>
<feature type="binding site" evidence="1">
    <location>
        <position position="110"/>
    </location>
    <ligand>
        <name>NADPH</name>
        <dbReference type="ChEBI" id="CHEBI:57783"/>
    </ligand>
</feature>
<feature type="binding site" evidence="1">
    <location>
        <position position="110"/>
    </location>
    <ligand>
        <name>sn-glycerol 3-phosphate</name>
        <dbReference type="ChEBI" id="CHEBI:57597"/>
    </ligand>
</feature>
<feature type="binding site" evidence="1">
    <location>
        <position position="139"/>
    </location>
    <ligand>
        <name>sn-glycerol 3-phosphate</name>
        <dbReference type="ChEBI" id="CHEBI:57597"/>
    </ligand>
</feature>
<feature type="binding site" evidence="1">
    <location>
        <position position="141"/>
    </location>
    <ligand>
        <name>sn-glycerol 3-phosphate</name>
        <dbReference type="ChEBI" id="CHEBI:57597"/>
    </ligand>
</feature>
<feature type="binding site" evidence="1">
    <location>
        <position position="143"/>
    </location>
    <ligand>
        <name>NADPH</name>
        <dbReference type="ChEBI" id="CHEBI:57783"/>
    </ligand>
</feature>
<feature type="binding site" evidence="1">
    <location>
        <position position="195"/>
    </location>
    <ligand>
        <name>sn-glycerol 3-phosphate</name>
        <dbReference type="ChEBI" id="CHEBI:57597"/>
    </ligand>
</feature>
<feature type="binding site" evidence="1">
    <location>
        <position position="248"/>
    </location>
    <ligand>
        <name>sn-glycerol 3-phosphate</name>
        <dbReference type="ChEBI" id="CHEBI:57597"/>
    </ligand>
</feature>
<feature type="binding site" evidence="1">
    <location>
        <position position="258"/>
    </location>
    <ligand>
        <name>sn-glycerol 3-phosphate</name>
        <dbReference type="ChEBI" id="CHEBI:57597"/>
    </ligand>
</feature>
<feature type="binding site" evidence="1">
    <location>
        <position position="259"/>
    </location>
    <ligand>
        <name>NADPH</name>
        <dbReference type="ChEBI" id="CHEBI:57783"/>
    </ligand>
</feature>
<feature type="binding site" evidence="1">
    <location>
        <position position="259"/>
    </location>
    <ligand>
        <name>sn-glycerol 3-phosphate</name>
        <dbReference type="ChEBI" id="CHEBI:57597"/>
    </ligand>
</feature>
<feature type="binding site" evidence="1">
    <location>
        <position position="260"/>
    </location>
    <ligand>
        <name>sn-glycerol 3-phosphate</name>
        <dbReference type="ChEBI" id="CHEBI:57597"/>
    </ligand>
</feature>
<feature type="binding site" evidence="1">
    <location>
        <position position="283"/>
    </location>
    <ligand>
        <name>NADPH</name>
        <dbReference type="ChEBI" id="CHEBI:57783"/>
    </ligand>
</feature>
<feature type="binding site" evidence="1">
    <location>
        <position position="285"/>
    </location>
    <ligand>
        <name>NADPH</name>
        <dbReference type="ChEBI" id="CHEBI:57783"/>
    </ligand>
</feature>
<sequence length="339" mass="36194">MNTNPASMAVIGAGSYGTALAITLARNGHQVVLWGHDPKHIQQLQQDRCNRAFLPDAAFPDTLRLETDLACALAASRDVLVVVPSHVFGAVLHQLKPHLRKDARIVWATKGLEAETGRLLQDVAREVLGEAIPLAVISGPTFAKELAAGLPTAIALASTDVQFSEDLQQLLHCGKSFRVYSNPDFIGVQLGGAVKNVIAIGAGMSDGIGFGANARTALITRGLAEMTRLGTALGADPSTFMGMAGLGDLVLTCTDNQSRNRRFGIMLGQGLGVKEAQDNIGQVVEGYRNTKEVLALAQRHGVEMPITEQIYQVLYCHKNAREAALTLLGRTKKDEKIGI</sequence>
<name>GPDA_YERPP</name>
<reference key="1">
    <citation type="submission" date="2007-02" db="EMBL/GenBank/DDBJ databases">
        <title>Complete sequence of chromosome of Yersinia pestis Pestoides F.</title>
        <authorList>
            <consortium name="US DOE Joint Genome Institute"/>
            <person name="Copeland A."/>
            <person name="Lucas S."/>
            <person name="Lapidus A."/>
            <person name="Barry K."/>
            <person name="Detter J.C."/>
            <person name="Glavina del Rio T."/>
            <person name="Hammon N."/>
            <person name="Israni S."/>
            <person name="Dalin E."/>
            <person name="Tice H."/>
            <person name="Pitluck S."/>
            <person name="Di Bartolo G."/>
            <person name="Chain P."/>
            <person name="Malfatti S."/>
            <person name="Shin M."/>
            <person name="Vergez L."/>
            <person name="Schmutz J."/>
            <person name="Larimer F."/>
            <person name="Land M."/>
            <person name="Hauser L."/>
            <person name="Worsham P."/>
            <person name="Chu M."/>
            <person name="Bearden S."/>
            <person name="Garcia E."/>
            <person name="Richardson P."/>
        </authorList>
    </citation>
    <scope>NUCLEOTIDE SEQUENCE [LARGE SCALE GENOMIC DNA]</scope>
    <source>
        <strain>Pestoides F</strain>
    </source>
</reference>
<gene>
    <name evidence="1" type="primary">gpsA</name>
    <name type="ordered locus">YPDSF_3837</name>
</gene>
<accession>A4TSB8</accession>